<comment type="function">
    <text evidence="2 3">Binds ssDNA with nanomolar affinity but no sequence specificity.</text>
</comment>
<comment type="subunit">
    <text evidence="2 3">Homodimer; two homodimers can further weakly assemble into a homotetramer.</text>
</comment>
<comment type="induction">
    <text evidence="2">Expressed in the early phase of the viral replicative cycle.</text>
</comment>
<comment type="similarity">
    <text evidence="4">Belongs to the skunalikevirus SSB protein family.</text>
</comment>
<evidence type="ECO:0000256" key="1">
    <source>
        <dbReference type="SAM" id="MobiDB-lite"/>
    </source>
</evidence>
<evidence type="ECO:0000269" key="2">
    <source>
    </source>
</evidence>
<evidence type="ECO:0000269" key="3">
    <source>
    </source>
</evidence>
<evidence type="ECO:0000305" key="4"/>
<evidence type="ECO:0000312" key="5">
    <source>
        <dbReference type="EMBL" id="AAR14301.2"/>
    </source>
</evidence>
<evidence type="ECO:0007744" key="6">
    <source>
        <dbReference type="PDB" id="2WKC"/>
    </source>
</evidence>
<evidence type="ECO:0007744" key="7">
    <source>
        <dbReference type="PDB" id="2WKD"/>
    </source>
</evidence>
<accession>Q6JM09</accession>
<name>SSB_BPLP2</name>
<proteinExistence type="evidence at protein level"/>
<protein>
    <recommendedName>
        <fullName evidence="5">SSB protein</fullName>
    </recommendedName>
    <alternativeName>
        <fullName evidence="4">Gene product 34</fullName>
        <shortName evidence="4">Gp34</shortName>
    </alternativeName>
    <alternativeName>
        <fullName evidence="4">Single-stranded DNA binding protein</fullName>
    </alternativeName>
</protein>
<dbReference type="EMBL" id="GQ979703">
    <property type="protein sequence ID" value="AAR14301.2"/>
    <property type="molecule type" value="Genomic_DNA"/>
</dbReference>
<dbReference type="RefSeq" id="YP_009613514.1">
    <property type="nucleotide sequence ID" value="NC_042024.1"/>
</dbReference>
<dbReference type="PDB" id="2WKC">
    <property type="method" value="X-ray"/>
    <property type="resolution" value="2.60 A"/>
    <property type="chains" value="A/B/C/D=3-119"/>
</dbReference>
<dbReference type="PDB" id="2WKD">
    <property type="method" value="X-ray"/>
    <property type="resolution" value="2.10 A"/>
    <property type="chains" value="A=3-119"/>
</dbReference>
<dbReference type="PDBsum" id="2WKC"/>
<dbReference type="PDBsum" id="2WKD"/>
<dbReference type="SMR" id="Q6JM09"/>
<dbReference type="GeneID" id="40089889"/>
<dbReference type="Proteomes" id="UP000002348">
    <property type="component" value="Segment"/>
</dbReference>
<dbReference type="GO" id="GO:0003697">
    <property type="term" value="F:single-stranded DNA binding"/>
    <property type="evidence" value="ECO:0000314"/>
    <property type="project" value="UniProtKB"/>
</dbReference>
<dbReference type="FunFam" id="2.40.50.400:FF:000001">
    <property type="entry name" value="SSB protein"/>
    <property type="match status" value="1"/>
</dbReference>
<dbReference type="Gene3D" id="2.40.50.400">
    <property type="entry name" value="Lactococcus phage single-stranded DNA binding protein"/>
    <property type="match status" value="1"/>
</dbReference>
<dbReference type="InterPro" id="IPR038621">
    <property type="entry name" value="Lacto_phage_SSB_sf"/>
</dbReference>
<dbReference type="InterPro" id="IPR031900">
    <property type="entry name" value="Phage_SSB"/>
</dbReference>
<dbReference type="Pfam" id="PF16773">
    <property type="entry name" value="Phage_SSB"/>
    <property type="match status" value="1"/>
</dbReference>
<keyword id="KW-0002">3D-structure</keyword>
<keyword id="KW-0238">DNA-binding</keyword>
<keyword id="KW-0244">Early protein</keyword>
<organism>
    <name type="scientific">Lactococcus phage p2</name>
    <name type="common">Lactococcus lactis bacteriophage p2</name>
    <dbReference type="NCBI Taxonomy" id="254252"/>
    <lineage>
        <taxon>Viruses</taxon>
        <taxon>Duplodnaviria</taxon>
        <taxon>Heunggongvirae</taxon>
        <taxon>Uroviricota</taxon>
        <taxon>Caudoviricetes</taxon>
        <taxon>Skunavirus</taxon>
    </lineage>
</organism>
<reference key="1">
    <citation type="submission" date="2010-02" db="EMBL/GenBank/DDBJ databases">
        <title>Complete genomic sequence of Lactococcus lactis phage p2.</title>
        <authorList>
            <person name="Tremblay D.M."/>
            <person name="Deveau H."/>
            <person name="Moineau S."/>
        </authorList>
    </citation>
    <scope>NUCLEOTIDE SEQUENCE [LARGE SCALE GENOMIC DNA]</scope>
</reference>
<reference key="2">
    <citation type="journal article" date="2013" name="Biochim. Biophys. Acta">
        <title>The DNA binding mechanism of a SSB protein from Lactococcus lactis siphophage p2.</title>
        <authorList>
            <person name="Scaltriti E."/>
            <person name="Polverini E."/>
            <person name="Grolli S."/>
            <person name="Eufemi E."/>
            <person name="Moineau S."/>
            <person name="Cambillau C."/>
            <person name="Ramoni R."/>
        </authorList>
    </citation>
    <scope>FUNCTION</scope>
    <scope>DNA-BINDING</scope>
    <scope>SUBUNIT</scope>
    <scope>MUTAGENESIS OF ARG-16; LYS-22 AND LYS-25</scope>
</reference>
<reference evidence="6 7" key="3">
    <citation type="journal article" date="2009" name="Mol. Microbiol.">
        <title>Structure and function of phage p2 ORF34(p2), a new type of single-stranded DNA binding protein.</title>
        <authorList>
            <person name="Scaltriti E."/>
            <person name="Tegoni M."/>
            <person name="Rivetti C."/>
            <person name="Launay H."/>
            <person name="Masson J.Y."/>
            <person name="Magadan A.H."/>
            <person name="Tremblay D."/>
            <person name="Moineau S."/>
            <person name="Ramoni R."/>
            <person name="Lichiere J."/>
            <person name="Campanacci V."/>
            <person name="Cambillau C."/>
            <person name="Ortiz-Lombardia M."/>
        </authorList>
    </citation>
    <scope>X-RAY CRYSTALLOGRAPHY (2.10 ANGSTROMS) OF 3-119</scope>
    <scope>INDUCTION</scope>
    <scope>FUNCTION</scope>
    <scope>DNA-BINDING</scope>
    <scope>SUBUNIT</scope>
</reference>
<sequence length="119" mass="12970">MAIITVTAQANEKNTRTVSTAKGDKKIISVPLFEKEKGSNVKVAYGSAFLPDFIQLGDTVTVSGRVQAKESGEYVNYNFVFPTVEKVFITNDNSSQSQAKQDLFGGSEPIEVNSEDLPF</sequence>
<organismHost>
    <name type="scientific">Lactococcus lactis</name>
    <dbReference type="NCBI Taxonomy" id="1358"/>
</organismHost>
<feature type="chain" id="PRO_0000438234" description="SSB protein">
    <location>
        <begin position="1"/>
        <end position="119"/>
    </location>
</feature>
<feature type="region of interest" description="Disordered" evidence="1">
    <location>
        <begin position="96"/>
        <end position="119"/>
    </location>
</feature>
<feature type="mutagenesis site" description="Loss of ssDNA-binding." evidence="3">
    <original>R</original>
    <variation>A</variation>
    <location>
        <position position="16"/>
    </location>
</feature>
<feature type="mutagenesis site" description="No effect on ssDNA-binding." evidence="3">
    <original>K</original>
    <variation>A</variation>
    <location>
        <position position="22"/>
    </location>
</feature>
<feature type="mutagenesis site" description="No effect on ssDNA-binding." evidence="3">
    <original>K</original>
    <variation>A</variation>
    <location>
        <position position="25"/>
    </location>
</feature>